<gene>
    <name evidence="1" type="primary">atpD</name>
    <name type="ordered locus">WP1157</name>
</gene>
<protein>
    <recommendedName>
        <fullName evidence="1">ATP synthase subunit beta</fullName>
        <ecNumber evidence="1">7.1.2.2</ecNumber>
    </recommendedName>
    <alternativeName>
        <fullName evidence="1">ATP synthase F1 sector subunit beta</fullName>
    </alternativeName>
    <alternativeName>
        <fullName evidence="1">F-ATPase subunit beta</fullName>
    </alternativeName>
</protein>
<proteinExistence type="inferred from homology"/>
<name>ATPB_WOLPP</name>
<comment type="function">
    <text evidence="1">Produces ATP from ADP in the presence of a proton gradient across the membrane. The catalytic sites are hosted primarily by the beta subunits.</text>
</comment>
<comment type="catalytic activity">
    <reaction evidence="1">
        <text>ATP + H2O + 4 H(+)(in) = ADP + phosphate + 5 H(+)(out)</text>
        <dbReference type="Rhea" id="RHEA:57720"/>
        <dbReference type="ChEBI" id="CHEBI:15377"/>
        <dbReference type="ChEBI" id="CHEBI:15378"/>
        <dbReference type="ChEBI" id="CHEBI:30616"/>
        <dbReference type="ChEBI" id="CHEBI:43474"/>
        <dbReference type="ChEBI" id="CHEBI:456216"/>
        <dbReference type="EC" id="7.1.2.2"/>
    </reaction>
</comment>
<comment type="subunit">
    <text evidence="1">F-type ATPases have 2 components, CF(1) - the catalytic core - and CF(0) - the membrane proton channel. CF(1) has five subunits: alpha(3), beta(3), gamma(1), delta(1), epsilon(1). CF(0) has three main subunits: a(1), b(2) and c(9-12). The alpha and beta chains form an alternating ring which encloses part of the gamma chain. CF(1) is attached to CF(0) by a central stalk formed by the gamma and epsilon chains, while a peripheral stalk is formed by the delta and b chains.</text>
</comment>
<comment type="subcellular location">
    <subcellularLocation>
        <location evidence="1">Cell membrane</location>
        <topology evidence="1">Peripheral membrane protein</topology>
    </subcellularLocation>
</comment>
<comment type="similarity">
    <text evidence="1">Belongs to the ATPase alpha/beta chains family.</text>
</comment>
<keyword id="KW-0066">ATP synthesis</keyword>
<keyword id="KW-0067">ATP-binding</keyword>
<keyword id="KW-1003">Cell membrane</keyword>
<keyword id="KW-0139">CF(1)</keyword>
<keyword id="KW-0375">Hydrogen ion transport</keyword>
<keyword id="KW-0406">Ion transport</keyword>
<keyword id="KW-0472">Membrane</keyword>
<keyword id="KW-0547">Nucleotide-binding</keyword>
<keyword id="KW-1278">Translocase</keyword>
<keyword id="KW-0813">Transport</keyword>
<sequence>MSTGKVVKITQAVVDLKFEDGLPKIFNALKSKLKYKGKELVLEVSQHIGDNIVRCIAMDSTDGMSRGDEFVDTGAPISVPVGRSTLGRIFNVVGELIDECGPLKGKYDLEPIHRSPPSFTEQKIQEEVLVTGIKVIDLLAPYLKGGKIGLFGGAGVGKTVLIMELINNIAKAHKGFSVFAGVGERTREGNDLYNEMITSNVIDINEHEKSQAVLVYGQMNEPPGARARVALTALTMAEYFRDHENQDVLFFVDNIFRFTQAGSEISALLGRIPSAVGYQPTLATDMGAMQERIASTTAGSITSVQAIYVPADDLTDPAPATTFSHLDATTVLSRQIAEMGIYPAVDPLDSTSQSLSAEIIGEEHYNVASEVKRILQTYKSLQDIIAILGMDELSDEDKIIVDRARKIQKFLSQPFHVAEVFTGMSGKFVSLSDTISSFKGIIEGKYDHLPEAAFYMVGSISEAIEKAESIKAEVGAGH</sequence>
<feature type="chain" id="PRO_1000143561" description="ATP synthase subunit beta">
    <location>
        <begin position="1"/>
        <end position="478"/>
    </location>
</feature>
<feature type="binding site" evidence="1">
    <location>
        <begin position="152"/>
        <end position="159"/>
    </location>
    <ligand>
        <name>ATP</name>
        <dbReference type="ChEBI" id="CHEBI:30616"/>
    </ligand>
</feature>
<organism>
    <name type="scientific">Wolbachia pipientis subsp. Culex pipiens (strain wPip)</name>
    <dbReference type="NCBI Taxonomy" id="570417"/>
    <lineage>
        <taxon>Bacteria</taxon>
        <taxon>Pseudomonadati</taxon>
        <taxon>Pseudomonadota</taxon>
        <taxon>Alphaproteobacteria</taxon>
        <taxon>Rickettsiales</taxon>
        <taxon>Anaplasmataceae</taxon>
        <taxon>Wolbachieae</taxon>
        <taxon>Wolbachia</taxon>
    </lineage>
</organism>
<accession>B3CN17</accession>
<evidence type="ECO:0000255" key="1">
    <source>
        <dbReference type="HAMAP-Rule" id="MF_01347"/>
    </source>
</evidence>
<reference key="1">
    <citation type="journal article" date="2008" name="Mol. Biol. Evol.">
        <title>Genome evolution of Wolbachia strain wPip from the Culex pipiens group.</title>
        <authorList>
            <person name="Klasson L."/>
            <person name="Walker T."/>
            <person name="Sebaihia M."/>
            <person name="Sanders M.J."/>
            <person name="Quail M.A."/>
            <person name="Lord A."/>
            <person name="Sanders S."/>
            <person name="Earl J."/>
            <person name="O'Neill S.L."/>
            <person name="Thomson N."/>
            <person name="Sinkins S.P."/>
            <person name="Parkhill J."/>
        </authorList>
    </citation>
    <scope>NUCLEOTIDE SEQUENCE [LARGE SCALE GENOMIC DNA]</scope>
    <source>
        <strain>wPip</strain>
    </source>
</reference>
<dbReference type="EC" id="7.1.2.2" evidence="1"/>
<dbReference type="EMBL" id="AM999887">
    <property type="protein sequence ID" value="CAQ55265.1"/>
    <property type="molecule type" value="Genomic_DNA"/>
</dbReference>
<dbReference type="SMR" id="B3CN17"/>
<dbReference type="KEGG" id="wpi:WP1157"/>
<dbReference type="eggNOG" id="COG0055">
    <property type="taxonomic scope" value="Bacteria"/>
</dbReference>
<dbReference type="HOGENOM" id="CLU_022398_0_2_5"/>
<dbReference type="Proteomes" id="UP000008814">
    <property type="component" value="Chromosome"/>
</dbReference>
<dbReference type="GO" id="GO:0005886">
    <property type="term" value="C:plasma membrane"/>
    <property type="evidence" value="ECO:0007669"/>
    <property type="project" value="UniProtKB-SubCell"/>
</dbReference>
<dbReference type="GO" id="GO:0045259">
    <property type="term" value="C:proton-transporting ATP synthase complex"/>
    <property type="evidence" value="ECO:0007669"/>
    <property type="project" value="UniProtKB-KW"/>
</dbReference>
<dbReference type="GO" id="GO:0005524">
    <property type="term" value="F:ATP binding"/>
    <property type="evidence" value="ECO:0007669"/>
    <property type="project" value="UniProtKB-UniRule"/>
</dbReference>
<dbReference type="GO" id="GO:0016887">
    <property type="term" value="F:ATP hydrolysis activity"/>
    <property type="evidence" value="ECO:0007669"/>
    <property type="project" value="InterPro"/>
</dbReference>
<dbReference type="GO" id="GO:0046933">
    <property type="term" value="F:proton-transporting ATP synthase activity, rotational mechanism"/>
    <property type="evidence" value="ECO:0007669"/>
    <property type="project" value="UniProtKB-UniRule"/>
</dbReference>
<dbReference type="CDD" id="cd18110">
    <property type="entry name" value="ATP-synt_F1_beta_C"/>
    <property type="match status" value="1"/>
</dbReference>
<dbReference type="CDD" id="cd18115">
    <property type="entry name" value="ATP-synt_F1_beta_N"/>
    <property type="match status" value="1"/>
</dbReference>
<dbReference type="CDD" id="cd01133">
    <property type="entry name" value="F1-ATPase_beta_CD"/>
    <property type="match status" value="1"/>
</dbReference>
<dbReference type="FunFam" id="1.10.1140.10:FF:000001">
    <property type="entry name" value="ATP synthase subunit beta"/>
    <property type="match status" value="1"/>
</dbReference>
<dbReference type="FunFam" id="3.40.50.300:FF:000026">
    <property type="entry name" value="ATP synthase subunit beta"/>
    <property type="match status" value="1"/>
</dbReference>
<dbReference type="Gene3D" id="2.40.10.170">
    <property type="match status" value="1"/>
</dbReference>
<dbReference type="Gene3D" id="1.10.1140.10">
    <property type="entry name" value="Bovine Mitochondrial F1-atpase, Atp Synthase Beta Chain, Chain D, domain 3"/>
    <property type="match status" value="1"/>
</dbReference>
<dbReference type="Gene3D" id="3.40.50.300">
    <property type="entry name" value="P-loop containing nucleotide triphosphate hydrolases"/>
    <property type="match status" value="1"/>
</dbReference>
<dbReference type="HAMAP" id="MF_01347">
    <property type="entry name" value="ATP_synth_beta_bact"/>
    <property type="match status" value="1"/>
</dbReference>
<dbReference type="InterPro" id="IPR003593">
    <property type="entry name" value="AAA+_ATPase"/>
</dbReference>
<dbReference type="InterPro" id="IPR055190">
    <property type="entry name" value="ATP-synt_VA_C"/>
</dbReference>
<dbReference type="InterPro" id="IPR005722">
    <property type="entry name" value="ATP_synth_F1_bsu"/>
</dbReference>
<dbReference type="InterPro" id="IPR020003">
    <property type="entry name" value="ATPase_a/bsu_AS"/>
</dbReference>
<dbReference type="InterPro" id="IPR050053">
    <property type="entry name" value="ATPase_alpha/beta_chains"/>
</dbReference>
<dbReference type="InterPro" id="IPR004100">
    <property type="entry name" value="ATPase_F1/V1/A1_a/bsu_N"/>
</dbReference>
<dbReference type="InterPro" id="IPR036121">
    <property type="entry name" value="ATPase_F1/V1/A1_a/bsu_N_sf"/>
</dbReference>
<dbReference type="InterPro" id="IPR000194">
    <property type="entry name" value="ATPase_F1/V1/A1_a/bsu_nucl-bd"/>
</dbReference>
<dbReference type="InterPro" id="IPR024034">
    <property type="entry name" value="ATPase_F1/V1_b/a_C"/>
</dbReference>
<dbReference type="InterPro" id="IPR027417">
    <property type="entry name" value="P-loop_NTPase"/>
</dbReference>
<dbReference type="NCBIfam" id="TIGR01039">
    <property type="entry name" value="atpD"/>
    <property type="match status" value="1"/>
</dbReference>
<dbReference type="PANTHER" id="PTHR15184">
    <property type="entry name" value="ATP SYNTHASE"/>
    <property type="match status" value="1"/>
</dbReference>
<dbReference type="PANTHER" id="PTHR15184:SF71">
    <property type="entry name" value="ATP SYNTHASE SUBUNIT BETA, MITOCHONDRIAL"/>
    <property type="match status" value="1"/>
</dbReference>
<dbReference type="Pfam" id="PF00006">
    <property type="entry name" value="ATP-synt_ab"/>
    <property type="match status" value="1"/>
</dbReference>
<dbReference type="Pfam" id="PF02874">
    <property type="entry name" value="ATP-synt_ab_N"/>
    <property type="match status" value="1"/>
</dbReference>
<dbReference type="Pfam" id="PF22919">
    <property type="entry name" value="ATP-synt_VA_C"/>
    <property type="match status" value="1"/>
</dbReference>
<dbReference type="PIRSF" id="PIRSF039072">
    <property type="entry name" value="ATPase_subunit_beta"/>
    <property type="match status" value="1"/>
</dbReference>
<dbReference type="SMART" id="SM00382">
    <property type="entry name" value="AAA"/>
    <property type="match status" value="1"/>
</dbReference>
<dbReference type="SUPFAM" id="SSF47917">
    <property type="entry name" value="C-terminal domain of alpha and beta subunits of F1 ATP synthase"/>
    <property type="match status" value="1"/>
</dbReference>
<dbReference type="SUPFAM" id="SSF50615">
    <property type="entry name" value="N-terminal domain of alpha and beta subunits of F1 ATP synthase"/>
    <property type="match status" value="1"/>
</dbReference>
<dbReference type="SUPFAM" id="SSF52540">
    <property type="entry name" value="P-loop containing nucleoside triphosphate hydrolases"/>
    <property type="match status" value="1"/>
</dbReference>
<dbReference type="PROSITE" id="PS00152">
    <property type="entry name" value="ATPASE_ALPHA_BETA"/>
    <property type="match status" value="1"/>
</dbReference>